<name>PROQ_ALIF1</name>
<protein>
    <recommendedName>
        <fullName evidence="1">RNA chaperone ProQ</fullName>
    </recommendedName>
</protein>
<gene>
    <name evidence="1" type="primary">proQ</name>
    <name type="ordered locus">VF_1279</name>
</gene>
<organism>
    <name type="scientific">Aliivibrio fischeri (strain ATCC 700601 / ES114)</name>
    <name type="common">Vibrio fischeri</name>
    <dbReference type="NCBI Taxonomy" id="312309"/>
    <lineage>
        <taxon>Bacteria</taxon>
        <taxon>Pseudomonadati</taxon>
        <taxon>Pseudomonadota</taxon>
        <taxon>Gammaproteobacteria</taxon>
        <taxon>Vibrionales</taxon>
        <taxon>Vibrionaceae</taxon>
        <taxon>Aliivibrio</taxon>
    </lineage>
</organism>
<accession>Q5E5C2</accession>
<feature type="chain" id="PRO_0000303103" description="RNA chaperone ProQ">
    <location>
        <begin position="1"/>
        <end position="208"/>
    </location>
</feature>
<feature type="region of interest" description="Disordered" evidence="2">
    <location>
        <begin position="106"/>
        <end position="154"/>
    </location>
</feature>
<feature type="compositionally biased region" description="Basic and acidic residues" evidence="2">
    <location>
        <begin position="106"/>
        <end position="127"/>
    </location>
</feature>
<proteinExistence type="inferred from homology"/>
<reference key="1">
    <citation type="journal article" date="2005" name="Proc. Natl. Acad. Sci. U.S.A.">
        <title>Complete genome sequence of Vibrio fischeri: a symbiotic bacterium with pathogenic congeners.</title>
        <authorList>
            <person name="Ruby E.G."/>
            <person name="Urbanowski M."/>
            <person name="Campbell J."/>
            <person name="Dunn A."/>
            <person name="Faini M."/>
            <person name="Gunsalus R."/>
            <person name="Lostroh P."/>
            <person name="Lupp C."/>
            <person name="McCann J."/>
            <person name="Millikan D."/>
            <person name="Schaefer A."/>
            <person name="Stabb E."/>
            <person name="Stevens A."/>
            <person name="Visick K."/>
            <person name="Whistler C."/>
            <person name="Greenberg E.P."/>
        </authorList>
    </citation>
    <scope>NUCLEOTIDE SEQUENCE [LARGE SCALE GENOMIC DNA]</scope>
    <source>
        <strain>ATCC 700601 / ES114</strain>
    </source>
</reference>
<sequence>MENSEKLANSKEVIAYIAERFPKCFILEGEAKPLKIGIFQDLAERLSDDPKVSKTQLRAGLRQYTSSWRYLHGVKPGASRVDLDGNPCGELEEEHIEHAKATLEESKAKVATRRKEQAKKAREEAKAKKTARAATPPKRRPQPAAKKVEQPVETRALNADEITVGNNVSVNMGKGNMPATIVEINKDDVRIRLSNGLQMVVKAENLRS</sequence>
<evidence type="ECO:0000255" key="1">
    <source>
        <dbReference type="HAMAP-Rule" id="MF_00749"/>
    </source>
</evidence>
<evidence type="ECO:0000256" key="2">
    <source>
        <dbReference type="SAM" id="MobiDB-lite"/>
    </source>
</evidence>
<comment type="function">
    <text evidence="1">RNA chaperone with significant RNA binding, RNA strand exchange and RNA duplexing activities.</text>
</comment>
<comment type="subcellular location">
    <subcellularLocation>
        <location evidence="1">Cytoplasm</location>
    </subcellularLocation>
</comment>
<comment type="similarity">
    <text evidence="1">Belongs to the ProQ family.</text>
</comment>
<keyword id="KW-0143">Chaperone</keyword>
<keyword id="KW-0963">Cytoplasm</keyword>
<keyword id="KW-1185">Reference proteome</keyword>
<keyword id="KW-0694">RNA-binding</keyword>
<dbReference type="EMBL" id="CP000020">
    <property type="protein sequence ID" value="AAW85774.1"/>
    <property type="molecule type" value="Genomic_DNA"/>
</dbReference>
<dbReference type="RefSeq" id="WP_005419190.1">
    <property type="nucleotide sequence ID" value="NZ_CAWLES010000001.1"/>
</dbReference>
<dbReference type="RefSeq" id="YP_204662.1">
    <property type="nucleotide sequence ID" value="NC_006840.2"/>
</dbReference>
<dbReference type="SMR" id="Q5E5C2"/>
<dbReference type="STRING" id="312309.VF_1279"/>
<dbReference type="EnsemblBacteria" id="AAW85774">
    <property type="protein sequence ID" value="AAW85774"/>
    <property type="gene ID" value="VF_1279"/>
</dbReference>
<dbReference type="GeneID" id="54163951"/>
<dbReference type="KEGG" id="vfi:VF_1279"/>
<dbReference type="PATRIC" id="fig|312309.11.peg.1288"/>
<dbReference type="eggNOG" id="COG3109">
    <property type="taxonomic scope" value="Bacteria"/>
</dbReference>
<dbReference type="HOGENOM" id="CLU_113254_0_0_6"/>
<dbReference type="OrthoDB" id="8421419at2"/>
<dbReference type="Proteomes" id="UP000000537">
    <property type="component" value="Chromosome I"/>
</dbReference>
<dbReference type="GO" id="GO:0005829">
    <property type="term" value="C:cytosol"/>
    <property type="evidence" value="ECO:0007669"/>
    <property type="project" value="TreeGrafter"/>
</dbReference>
<dbReference type="GO" id="GO:0033592">
    <property type="term" value="F:RNA strand annealing activity"/>
    <property type="evidence" value="ECO:0007669"/>
    <property type="project" value="UniProtKB-UniRule"/>
</dbReference>
<dbReference type="GO" id="GO:0034057">
    <property type="term" value="F:RNA strand-exchange activity"/>
    <property type="evidence" value="ECO:0007669"/>
    <property type="project" value="UniProtKB-UniRule"/>
</dbReference>
<dbReference type="GO" id="GO:0010608">
    <property type="term" value="P:post-transcriptional regulation of gene expression"/>
    <property type="evidence" value="ECO:0007669"/>
    <property type="project" value="InterPro"/>
</dbReference>
<dbReference type="FunFam" id="1.10.1710.10:FF:000001">
    <property type="entry name" value="RNA chaperone ProQ"/>
    <property type="match status" value="1"/>
</dbReference>
<dbReference type="Gene3D" id="1.10.1710.10">
    <property type="entry name" value="ProQ/FinO domain"/>
    <property type="match status" value="1"/>
</dbReference>
<dbReference type="HAMAP" id="MF_00749">
    <property type="entry name" value="ProQ"/>
    <property type="match status" value="1"/>
</dbReference>
<dbReference type="InterPro" id="IPR023529">
    <property type="entry name" value="ProQ"/>
</dbReference>
<dbReference type="InterPro" id="IPR016103">
    <property type="entry name" value="ProQ/FinO"/>
</dbReference>
<dbReference type="InterPro" id="IPR036442">
    <property type="entry name" value="ProQ/FinO_sf"/>
</dbReference>
<dbReference type="InterPro" id="IPR035236">
    <property type="entry name" value="ProQ_C"/>
</dbReference>
<dbReference type="NCBIfam" id="NF003434">
    <property type="entry name" value="PRK04950.1"/>
    <property type="match status" value="1"/>
</dbReference>
<dbReference type="PANTHER" id="PTHR38106">
    <property type="entry name" value="RNA CHAPERONE PROQ"/>
    <property type="match status" value="1"/>
</dbReference>
<dbReference type="PANTHER" id="PTHR38106:SF1">
    <property type="entry name" value="RNA CHAPERONE PROQ"/>
    <property type="match status" value="1"/>
</dbReference>
<dbReference type="Pfam" id="PF04352">
    <property type="entry name" value="ProQ"/>
    <property type="match status" value="1"/>
</dbReference>
<dbReference type="Pfam" id="PF17516">
    <property type="entry name" value="ProQ_C"/>
    <property type="match status" value="1"/>
</dbReference>
<dbReference type="SMART" id="SM00945">
    <property type="entry name" value="ProQ"/>
    <property type="match status" value="1"/>
</dbReference>
<dbReference type="SUPFAM" id="SSF48657">
    <property type="entry name" value="FinO-like"/>
    <property type="match status" value="1"/>
</dbReference>